<dbReference type="EMBL" id="AE001363">
    <property type="protein sequence ID" value="AAD18773.1"/>
    <property type="molecule type" value="Genomic_DNA"/>
</dbReference>
<dbReference type="EMBL" id="AE002161">
    <property type="protein sequence ID" value="AAF37996.1"/>
    <property type="molecule type" value="Genomic_DNA"/>
</dbReference>
<dbReference type="EMBL" id="BA000008">
    <property type="protein sequence ID" value="BAA98841.1"/>
    <property type="molecule type" value="Genomic_DNA"/>
</dbReference>
<dbReference type="EMBL" id="AE009440">
    <property type="protein sequence ID" value="AAP98589.1"/>
    <property type="molecule type" value="Genomic_DNA"/>
</dbReference>
<dbReference type="PIR" id="D72054">
    <property type="entry name" value="D72054"/>
</dbReference>
<dbReference type="PIR" id="G86569">
    <property type="entry name" value="G86569"/>
</dbReference>
<dbReference type="RefSeq" id="NP_224830.1">
    <property type="nucleotide sequence ID" value="NC_000922.1"/>
</dbReference>
<dbReference type="RefSeq" id="WP_010883272.1">
    <property type="nucleotide sequence ID" value="NZ_LN847257.1"/>
</dbReference>
<dbReference type="SMR" id="Q9Z7S0"/>
<dbReference type="STRING" id="406984.CPK_ORF00034"/>
<dbReference type="GeneID" id="45050684"/>
<dbReference type="KEGG" id="cpa:CP_0113"/>
<dbReference type="KEGG" id="cpj:rs8"/>
<dbReference type="KEGG" id="cpn:CPn_0634"/>
<dbReference type="KEGG" id="cpt:CpB0660"/>
<dbReference type="PATRIC" id="fig|115713.3.peg.704"/>
<dbReference type="eggNOG" id="COG0096">
    <property type="taxonomic scope" value="Bacteria"/>
</dbReference>
<dbReference type="HOGENOM" id="CLU_098428_0_2_0"/>
<dbReference type="OMA" id="NSAYHDT"/>
<dbReference type="OrthoDB" id="9802617at2"/>
<dbReference type="Proteomes" id="UP000000583">
    <property type="component" value="Chromosome"/>
</dbReference>
<dbReference type="Proteomes" id="UP000000801">
    <property type="component" value="Chromosome"/>
</dbReference>
<dbReference type="GO" id="GO:1990904">
    <property type="term" value="C:ribonucleoprotein complex"/>
    <property type="evidence" value="ECO:0007669"/>
    <property type="project" value="UniProtKB-KW"/>
</dbReference>
<dbReference type="GO" id="GO:0005840">
    <property type="term" value="C:ribosome"/>
    <property type="evidence" value="ECO:0007669"/>
    <property type="project" value="UniProtKB-KW"/>
</dbReference>
<dbReference type="GO" id="GO:0019843">
    <property type="term" value="F:rRNA binding"/>
    <property type="evidence" value="ECO:0007669"/>
    <property type="project" value="UniProtKB-UniRule"/>
</dbReference>
<dbReference type="GO" id="GO:0003735">
    <property type="term" value="F:structural constituent of ribosome"/>
    <property type="evidence" value="ECO:0007669"/>
    <property type="project" value="InterPro"/>
</dbReference>
<dbReference type="GO" id="GO:0006412">
    <property type="term" value="P:translation"/>
    <property type="evidence" value="ECO:0007669"/>
    <property type="project" value="UniProtKB-UniRule"/>
</dbReference>
<dbReference type="FunFam" id="3.30.1370.30:FF:000002">
    <property type="entry name" value="30S ribosomal protein S8"/>
    <property type="match status" value="1"/>
</dbReference>
<dbReference type="FunFam" id="3.30.1490.10:FF:000001">
    <property type="entry name" value="30S ribosomal protein S8"/>
    <property type="match status" value="1"/>
</dbReference>
<dbReference type="Gene3D" id="3.30.1370.30">
    <property type="match status" value="1"/>
</dbReference>
<dbReference type="Gene3D" id="3.30.1490.10">
    <property type="match status" value="1"/>
</dbReference>
<dbReference type="HAMAP" id="MF_01302_B">
    <property type="entry name" value="Ribosomal_uS8_B"/>
    <property type="match status" value="1"/>
</dbReference>
<dbReference type="InterPro" id="IPR000630">
    <property type="entry name" value="Ribosomal_uS8"/>
</dbReference>
<dbReference type="InterPro" id="IPR047863">
    <property type="entry name" value="Ribosomal_uS8_CS"/>
</dbReference>
<dbReference type="InterPro" id="IPR035987">
    <property type="entry name" value="Ribosomal_uS8_sf"/>
</dbReference>
<dbReference type="NCBIfam" id="NF001109">
    <property type="entry name" value="PRK00136.1"/>
    <property type="match status" value="1"/>
</dbReference>
<dbReference type="PANTHER" id="PTHR11758">
    <property type="entry name" value="40S RIBOSOMAL PROTEIN S15A"/>
    <property type="match status" value="1"/>
</dbReference>
<dbReference type="Pfam" id="PF00410">
    <property type="entry name" value="Ribosomal_S8"/>
    <property type="match status" value="1"/>
</dbReference>
<dbReference type="SUPFAM" id="SSF56047">
    <property type="entry name" value="Ribosomal protein S8"/>
    <property type="match status" value="1"/>
</dbReference>
<dbReference type="PROSITE" id="PS00053">
    <property type="entry name" value="RIBOSOMAL_S8"/>
    <property type="match status" value="1"/>
</dbReference>
<comment type="function">
    <text evidence="1">One of the primary rRNA binding proteins, it binds directly to 16S rRNA central domain where it helps coordinate assembly of the platform of the 30S subunit.</text>
</comment>
<comment type="subunit">
    <text evidence="1">Part of the 30S ribosomal subunit. Contacts proteins S5 and S12.</text>
</comment>
<comment type="similarity">
    <text evidence="1">Belongs to the universal ribosomal protein uS8 family.</text>
</comment>
<gene>
    <name evidence="1" type="primary">rpsH</name>
    <name type="synonym">rs8</name>
    <name type="ordered locus">CPn_0634</name>
    <name type="ordered locus">CP_0113</name>
    <name type="ordered locus">CpB0660</name>
</gene>
<reference key="1">
    <citation type="journal article" date="1999" name="Nat. Genet.">
        <title>Comparative genomes of Chlamydia pneumoniae and C. trachomatis.</title>
        <authorList>
            <person name="Kalman S."/>
            <person name="Mitchell W.P."/>
            <person name="Marathe R."/>
            <person name="Lammel C.J."/>
            <person name="Fan J."/>
            <person name="Hyman R.W."/>
            <person name="Olinger L."/>
            <person name="Grimwood J."/>
            <person name="Davis R.W."/>
            <person name="Stephens R.S."/>
        </authorList>
    </citation>
    <scope>NUCLEOTIDE SEQUENCE [LARGE SCALE GENOMIC DNA]</scope>
    <source>
        <strain>CWL029</strain>
    </source>
</reference>
<reference key="2">
    <citation type="journal article" date="2000" name="Nucleic Acids Res.">
        <title>Genome sequences of Chlamydia trachomatis MoPn and Chlamydia pneumoniae AR39.</title>
        <authorList>
            <person name="Read T.D."/>
            <person name="Brunham R.C."/>
            <person name="Shen C."/>
            <person name="Gill S.R."/>
            <person name="Heidelberg J.F."/>
            <person name="White O."/>
            <person name="Hickey E.K."/>
            <person name="Peterson J.D."/>
            <person name="Utterback T.R."/>
            <person name="Berry K.J."/>
            <person name="Bass S."/>
            <person name="Linher K.D."/>
            <person name="Weidman J.F."/>
            <person name="Khouri H.M."/>
            <person name="Craven B."/>
            <person name="Bowman C."/>
            <person name="Dodson R.J."/>
            <person name="Gwinn M.L."/>
            <person name="Nelson W.C."/>
            <person name="DeBoy R.T."/>
            <person name="Kolonay J.F."/>
            <person name="McClarty G."/>
            <person name="Salzberg S.L."/>
            <person name="Eisen J.A."/>
            <person name="Fraser C.M."/>
        </authorList>
    </citation>
    <scope>NUCLEOTIDE SEQUENCE [LARGE SCALE GENOMIC DNA]</scope>
    <source>
        <strain>AR39</strain>
    </source>
</reference>
<reference key="3">
    <citation type="journal article" date="2000" name="Nucleic Acids Res.">
        <title>Comparison of whole genome sequences of Chlamydia pneumoniae J138 from Japan and CWL029 from USA.</title>
        <authorList>
            <person name="Shirai M."/>
            <person name="Hirakawa H."/>
            <person name="Kimoto M."/>
            <person name="Tabuchi M."/>
            <person name="Kishi F."/>
            <person name="Ouchi K."/>
            <person name="Shiba T."/>
            <person name="Ishii K."/>
            <person name="Hattori M."/>
            <person name="Kuhara S."/>
            <person name="Nakazawa T."/>
        </authorList>
    </citation>
    <scope>NUCLEOTIDE SEQUENCE [LARGE SCALE GENOMIC DNA]</scope>
    <source>
        <strain>J138</strain>
    </source>
</reference>
<reference key="4">
    <citation type="submission" date="2002-05" db="EMBL/GenBank/DDBJ databases">
        <title>The genome sequence of Chlamydia pneumoniae TW183 and comparison with other Chlamydia strains based on whole genome sequence analysis.</title>
        <authorList>
            <person name="Geng M.M."/>
            <person name="Schuhmacher A."/>
            <person name="Muehldorfer I."/>
            <person name="Bensch K.W."/>
            <person name="Schaefer K.P."/>
            <person name="Schneider S."/>
            <person name="Pohl T."/>
            <person name="Essig A."/>
            <person name="Marre R."/>
            <person name="Melchers K."/>
        </authorList>
    </citation>
    <scope>NUCLEOTIDE SEQUENCE [LARGE SCALE GENOMIC DNA]</scope>
    <source>
        <strain>TW-183</strain>
    </source>
</reference>
<proteinExistence type="inferred from homology"/>
<evidence type="ECO:0000255" key="1">
    <source>
        <dbReference type="HAMAP-Rule" id="MF_01302"/>
    </source>
</evidence>
<evidence type="ECO:0000305" key="2"/>
<accession>Q9Z7S0</accession>
<accession>Q9JQG9</accession>
<protein>
    <recommendedName>
        <fullName evidence="1">Small ribosomal subunit protein uS8</fullName>
    </recommendedName>
    <alternativeName>
        <fullName evidence="2">30S ribosomal protein S8</fullName>
    </alternativeName>
</protein>
<organism>
    <name type="scientific">Chlamydia pneumoniae</name>
    <name type="common">Chlamydophila pneumoniae</name>
    <dbReference type="NCBI Taxonomy" id="83558"/>
    <lineage>
        <taxon>Bacteria</taxon>
        <taxon>Pseudomonadati</taxon>
        <taxon>Chlamydiota</taxon>
        <taxon>Chlamydiia</taxon>
        <taxon>Chlamydiales</taxon>
        <taxon>Chlamydiaceae</taxon>
        <taxon>Chlamydia/Chlamydophila group</taxon>
        <taxon>Chlamydia</taxon>
    </lineage>
</organism>
<sequence length="133" mass="15117">MGMTSDSIADLLTRIRNALMAEHLYVDVEHSKMREAIVKILKHKGFVAHYLVKEENRKRAMRVFLQYSDDRKPVIHQLKRVSKPSRRVYVSAAKIPYVFGNMGISVLSTSQGVMEGSLARSKNIGGELLCLVW</sequence>
<keyword id="KW-0687">Ribonucleoprotein</keyword>
<keyword id="KW-0689">Ribosomal protein</keyword>
<keyword id="KW-0694">RNA-binding</keyword>
<keyword id="KW-0699">rRNA-binding</keyword>
<feature type="chain" id="PRO_0000126392" description="Small ribosomal subunit protein uS8">
    <location>
        <begin position="1"/>
        <end position="133"/>
    </location>
</feature>
<name>RS8_CHLPN</name>